<reference key="1">
    <citation type="journal article" date="1984" name="Nature">
        <title>DNA sequence and expression of the B95-8 Epstein-Barr virus genome.</title>
        <authorList>
            <person name="Baer R."/>
            <person name="Bankier A.T."/>
            <person name="Biggin M.D."/>
            <person name="Deininger P.L."/>
            <person name="Farrell P.J."/>
            <person name="Gibson T.J."/>
            <person name="Hatfull G."/>
            <person name="Hudson G.S."/>
            <person name="Satchwell S.C."/>
            <person name="Seguin C."/>
            <person name="Tuffnell P.S."/>
            <person name="Barrell B.G."/>
        </authorList>
    </citation>
    <scope>NUCLEOTIDE SEQUENCE [LARGE SCALE GENOMIC DNA]</scope>
</reference>
<reference key="2">
    <citation type="journal article" date="2003" name="Virology">
        <title>Updated Epstein-Barr virus (EBV) DNA sequence and analysis of a promoter for the BART (CST, BARF0) RNAs of EBV.</title>
        <authorList>
            <person name="de Jesus O."/>
            <person name="Smith P.R."/>
            <person name="Spender L.C."/>
            <person name="Elgueta Karstegl C."/>
            <person name="Niller H.H."/>
            <person name="Huang D."/>
            <person name="Farrell P.J."/>
        </authorList>
    </citation>
    <scope>GENOME REANNOTATION</scope>
</reference>
<reference evidence="3 4" key="3">
    <citation type="journal article" date="2020" name="Nat. Commun.">
        <title>Structure of Epstein-Barr virus tegument protein complex BBRF2-BSRF1 reveals its potential role in viral envelopment.</title>
        <authorList>
            <person name="He H.P."/>
            <person name="Luo M."/>
            <person name="Cao Y.L."/>
            <person name="Lin Y.X."/>
            <person name="Zhang H."/>
            <person name="Zhang X."/>
            <person name="Ou J.Y."/>
            <person name="Yu B."/>
            <person name="Chen X."/>
            <person name="Xu M."/>
            <person name="Feng L."/>
            <person name="Zeng M.S."/>
            <person name="Zeng Y.X."/>
            <person name="Gao S."/>
        </authorList>
    </citation>
    <scope>X-RAY CRYSTALLOGRAPHY (1.60 ANGSTROMS) OF 17-278</scope>
    <scope>INTERACTION WITH BSRF1</scope>
    <source>
        <strain>M81</strain>
    </source>
</reference>
<accession>P29882</accession>
<accession>Q777D5</accession>
<evidence type="ECO:0000255" key="1">
    <source>
        <dbReference type="HAMAP-Rule" id="MF_04038"/>
    </source>
</evidence>
<evidence type="ECO:0000269" key="2">
    <source>
    </source>
</evidence>
<evidence type="ECO:0007744" key="3">
    <source>
        <dbReference type="PDB" id="6LQN"/>
    </source>
</evidence>
<evidence type="ECO:0007744" key="4">
    <source>
        <dbReference type="PDB" id="6LQO"/>
    </source>
</evidence>
<evidence type="ECO:0007829" key="5">
    <source>
        <dbReference type="PDB" id="6LQN"/>
    </source>
</evidence>
<evidence type="ECO:0007829" key="6">
    <source>
        <dbReference type="PDB" id="6LQO"/>
    </source>
</evidence>
<keyword id="KW-0002">3D-structure</keyword>
<keyword id="KW-1035">Host cytoplasm</keyword>
<keyword id="KW-1040">Host Golgi apparatus</keyword>
<keyword id="KW-1185">Reference proteome</keyword>
<keyword id="KW-0946">Virion</keyword>
<keyword id="KW-0920">Virion tegument</keyword>
<name>CEP1_EBVB9</name>
<gene>
    <name type="ORF">BBRF2</name>
</gene>
<feature type="chain" id="PRO_0000115922" description="Cytoplasmic envelopment protein 1">
    <location>
        <begin position="1"/>
        <end position="278"/>
    </location>
</feature>
<feature type="turn" evidence="5">
    <location>
        <begin position="17"/>
        <end position="19"/>
    </location>
</feature>
<feature type="strand" evidence="5">
    <location>
        <begin position="24"/>
        <end position="35"/>
    </location>
</feature>
<feature type="strand" evidence="5">
    <location>
        <begin position="38"/>
        <end position="42"/>
    </location>
</feature>
<feature type="helix" evidence="5">
    <location>
        <begin position="56"/>
        <end position="68"/>
    </location>
</feature>
<feature type="strand" evidence="5">
    <location>
        <begin position="70"/>
        <end position="81"/>
    </location>
</feature>
<feature type="helix" evidence="5">
    <location>
        <begin position="82"/>
        <end position="84"/>
    </location>
</feature>
<feature type="strand" evidence="5">
    <location>
        <begin position="87"/>
        <end position="90"/>
    </location>
</feature>
<feature type="helix" evidence="5">
    <location>
        <begin position="94"/>
        <end position="100"/>
    </location>
</feature>
<feature type="strand" evidence="5">
    <location>
        <begin position="101"/>
        <end position="104"/>
    </location>
</feature>
<feature type="helix" evidence="5">
    <location>
        <begin position="109"/>
        <end position="123"/>
    </location>
</feature>
<feature type="helix" evidence="5">
    <location>
        <begin position="129"/>
        <end position="146"/>
    </location>
</feature>
<feature type="helix" evidence="5">
    <location>
        <begin position="149"/>
        <end position="168"/>
    </location>
</feature>
<feature type="helix" evidence="5">
    <location>
        <begin position="186"/>
        <end position="194"/>
    </location>
</feature>
<feature type="helix" evidence="5">
    <location>
        <begin position="199"/>
        <end position="209"/>
    </location>
</feature>
<feature type="helix" evidence="6">
    <location>
        <begin position="213"/>
        <end position="215"/>
    </location>
</feature>
<feature type="helix" evidence="5">
    <location>
        <begin position="222"/>
        <end position="234"/>
    </location>
</feature>
<feature type="turn" evidence="5">
    <location>
        <begin position="235"/>
        <end position="237"/>
    </location>
</feature>
<feature type="strand" evidence="5">
    <location>
        <begin position="240"/>
        <end position="244"/>
    </location>
</feature>
<feature type="helix" evidence="5">
    <location>
        <begin position="252"/>
        <end position="255"/>
    </location>
</feature>
<feature type="helix" evidence="5">
    <location>
        <begin position="257"/>
        <end position="268"/>
    </location>
</feature>
<feature type="strand" evidence="5">
    <location>
        <begin position="272"/>
        <end position="274"/>
    </location>
</feature>
<sequence length="278" mass="31272">MASGKHHQPGGTRSLTMQKVSLRVTPRLVLEVNRHNAICVATNVPEFYNARGDLNIRDLRAHVKARMISSQFCGYVLVSLLDSEDQVDHLNIFPHVFSERMILYKPNNVNLMEMCALLSMIENAKSPSIGLCREVLGRLTLLHSKCNNLDSLFLYNGARTLLSTLVKYHDLEEGAATPGPWNEGLSLFKLHKELKRAPSEARDLMQSLFLTSGKMGCLARSPKDYCADLNKEEDANSGFTFNLFYQDSLLTKHFQCQTVLQTLRRKCLGSDTVSKIIP</sequence>
<organismHost>
    <name type="scientific">Homo sapiens</name>
    <name type="common">Human</name>
    <dbReference type="NCBI Taxonomy" id="9606"/>
</organismHost>
<organism>
    <name type="scientific">Epstein-Barr virus (strain B95-8)</name>
    <name type="common">HHV-4</name>
    <name type="synonym">Human herpesvirus 4</name>
    <dbReference type="NCBI Taxonomy" id="10377"/>
    <lineage>
        <taxon>Viruses</taxon>
        <taxon>Duplodnaviria</taxon>
        <taxon>Heunggongvirae</taxon>
        <taxon>Peploviricota</taxon>
        <taxon>Herviviricetes</taxon>
        <taxon>Herpesvirales</taxon>
        <taxon>Orthoherpesviridae</taxon>
        <taxon>Gammaherpesvirinae</taxon>
        <taxon>Lymphocryptovirus</taxon>
        <taxon>Lymphocryptovirus humangamma4</taxon>
        <taxon>Epstein-Barr virus (strain GD1)</taxon>
    </lineage>
</organism>
<comment type="function">
    <text evidence="1">Plays a critical role in cytoplasmic virus egress. Participates in the final step of tegumentation and envelope acquisition within the host cytoplasm.</text>
</comment>
<comment type="subunit">
    <text evidence="2">Interacts with BSRF1 tegument protein; the BBRF2-BSRF1 complexes oligomerize and might play a role in tethering the viral nucleocapsids to the host Golgi membrane during secondary envelopment.</text>
</comment>
<comment type="subcellular location">
    <subcellularLocation>
        <location evidence="1">Virion</location>
    </subcellularLocation>
    <subcellularLocation>
        <location evidence="1">Virion tegument</location>
    </subcellularLocation>
    <subcellularLocation>
        <location evidence="1">Host cytoplasm</location>
    </subcellularLocation>
    <subcellularLocation>
        <location evidence="1">Host Golgi apparatus</location>
    </subcellularLocation>
    <text evidence="2">Probably associates with the Golgi apparatus through its interaction with BSRF1.</text>
</comment>
<comment type="similarity">
    <text evidence="1">Belongs to the herpesviridae cytoplasmic envelopment protein 1 family.</text>
</comment>
<protein>
    <recommendedName>
        <fullName evidence="1">Cytoplasmic envelopment protein 1</fullName>
    </recommendedName>
</protein>
<dbReference type="EMBL" id="V01555">
    <property type="protein sequence ID" value="CAA24822.1"/>
    <property type="molecule type" value="Genomic_DNA"/>
</dbReference>
<dbReference type="EMBL" id="AJ507799">
    <property type="protein sequence ID" value="CAD53433.1"/>
    <property type="molecule type" value="Genomic_DNA"/>
</dbReference>
<dbReference type="RefSeq" id="YP_401683.1">
    <property type="nucleotide sequence ID" value="NC_007605.1"/>
</dbReference>
<dbReference type="PDB" id="6LQN">
    <property type="method" value="X-ray"/>
    <property type="resolution" value="1.60 A"/>
    <property type="chains" value="A=17-278"/>
</dbReference>
<dbReference type="PDB" id="6LQO">
    <property type="method" value="X-ray"/>
    <property type="resolution" value="3.09 A"/>
    <property type="chains" value="A/B/C/D/E/F=17-278"/>
</dbReference>
<dbReference type="PDBsum" id="6LQN"/>
<dbReference type="PDBsum" id="6LQO"/>
<dbReference type="SMR" id="P29882"/>
<dbReference type="IntAct" id="P29882">
    <property type="interactions" value="18"/>
</dbReference>
<dbReference type="MINT" id="P29882"/>
<dbReference type="DNASU" id="3783686"/>
<dbReference type="GeneID" id="3783686"/>
<dbReference type="KEGG" id="vg:3783686"/>
<dbReference type="Proteomes" id="UP000153037">
    <property type="component" value="Segment"/>
</dbReference>
<dbReference type="GO" id="GO:0044177">
    <property type="term" value="C:host cell Golgi apparatus"/>
    <property type="evidence" value="ECO:0007669"/>
    <property type="project" value="UniProtKB-SubCell"/>
</dbReference>
<dbReference type="GO" id="GO:0019033">
    <property type="term" value="C:viral tegument"/>
    <property type="evidence" value="ECO:0007669"/>
    <property type="project" value="UniProtKB-SubCell"/>
</dbReference>
<dbReference type="HAMAP" id="MF_04038">
    <property type="entry name" value="HSV_CEP1"/>
    <property type="match status" value="1"/>
</dbReference>
<dbReference type="InterPro" id="IPR002600">
    <property type="entry name" value="Herpes_UL7"/>
</dbReference>
<dbReference type="Pfam" id="PF01677">
    <property type="entry name" value="Herpes_UL7"/>
    <property type="match status" value="1"/>
</dbReference>
<proteinExistence type="evidence at protein level"/>